<gene>
    <name evidence="1" type="primary">recR</name>
    <name type="ordered locus">Pden_3647</name>
</gene>
<organism>
    <name type="scientific">Paracoccus denitrificans (strain Pd 1222)</name>
    <dbReference type="NCBI Taxonomy" id="318586"/>
    <lineage>
        <taxon>Bacteria</taxon>
        <taxon>Pseudomonadati</taxon>
        <taxon>Pseudomonadota</taxon>
        <taxon>Alphaproteobacteria</taxon>
        <taxon>Rhodobacterales</taxon>
        <taxon>Paracoccaceae</taxon>
        <taxon>Paracoccus</taxon>
    </lineage>
</organism>
<evidence type="ECO:0000255" key="1">
    <source>
        <dbReference type="HAMAP-Rule" id="MF_00017"/>
    </source>
</evidence>
<sequence>MAAAGDEIETLIATMARLPGLGPRSARRIVLHLIRRRTGQMAQLAGLMANVAEHARECLVCGNVTGSDICPICEDPDRATGEICVVTDVADLWALERGRAFHGRYHVLGGSLSALDEVGPEDLRIPQLIARIAEEGITEVILALSATVEGQTTAHYIAEALAPTGVAVTGLAQGVPIGGELDYLDDGTITAALRARRKL</sequence>
<feature type="chain" id="PRO_0000322926" description="Recombination protein RecR">
    <location>
        <begin position="1"/>
        <end position="199"/>
    </location>
</feature>
<feature type="domain" description="Toprim" evidence="1">
    <location>
        <begin position="81"/>
        <end position="176"/>
    </location>
</feature>
<feature type="zinc finger region" description="C4-type" evidence="1">
    <location>
        <begin position="58"/>
        <end position="73"/>
    </location>
</feature>
<name>RECR_PARDP</name>
<protein>
    <recommendedName>
        <fullName evidence="1">Recombination protein RecR</fullName>
    </recommendedName>
</protein>
<accession>A1B870</accession>
<reference key="1">
    <citation type="submission" date="2006-12" db="EMBL/GenBank/DDBJ databases">
        <title>Complete sequence of chromosome 2 of Paracoccus denitrificans PD1222.</title>
        <authorList>
            <person name="Copeland A."/>
            <person name="Lucas S."/>
            <person name="Lapidus A."/>
            <person name="Barry K."/>
            <person name="Detter J.C."/>
            <person name="Glavina del Rio T."/>
            <person name="Hammon N."/>
            <person name="Israni S."/>
            <person name="Dalin E."/>
            <person name="Tice H."/>
            <person name="Pitluck S."/>
            <person name="Munk A.C."/>
            <person name="Brettin T."/>
            <person name="Bruce D."/>
            <person name="Han C."/>
            <person name="Tapia R."/>
            <person name="Gilna P."/>
            <person name="Schmutz J."/>
            <person name="Larimer F."/>
            <person name="Land M."/>
            <person name="Hauser L."/>
            <person name="Kyrpides N."/>
            <person name="Lykidis A."/>
            <person name="Spiro S."/>
            <person name="Richardson D.J."/>
            <person name="Moir J.W.B."/>
            <person name="Ferguson S.J."/>
            <person name="van Spanning R.J.M."/>
            <person name="Richardson P."/>
        </authorList>
    </citation>
    <scope>NUCLEOTIDE SEQUENCE [LARGE SCALE GENOMIC DNA]</scope>
    <source>
        <strain>Pd 1222</strain>
    </source>
</reference>
<comment type="function">
    <text evidence="1">May play a role in DNA repair. It seems to be involved in an RecBC-independent recombinational process of DNA repair. It may act with RecF and RecO.</text>
</comment>
<comment type="similarity">
    <text evidence="1">Belongs to the RecR family.</text>
</comment>
<dbReference type="EMBL" id="CP000490">
    <property type="protein sequence ID" value="ABL71714.1"/>
    <property type="molecule type" value="Genomic_DNA"/>
</dbReference>
<dbReference type="RefSeq" id="WP_011749883.1">
    <property type="nucleotide sequence ID" value="NC_008687.1"/>
</dbReference>
<dbReference type="SMR" id="A1B870"/>
<dbReference type="STRING" id="318586.Pden_3647"/>
<dbReference type="EnsemblBacteria" id="ABL71714">
    <property type="protein sequence ID" value="ABL71714"/>
    <property type="gene ID" value="Pden_3647"/>
</dbReference>
<dbReference type="GeneID" id="93453301"/>
<dbReference type="KEGG" id="pde:Pden_3647"/>
<dbReference type="eggNOG" id="COG0353">
    <property type="taxonomic scope" value="Bacteria"/>
</dbReference>
<dbReference type="HOGENOM" id="CLU_060739_1_1_5"/>
<dbReference type="OrthoDB" id="9802672at2"/>
<dbReference type="Proteomes" id="UP000000361">
    <property type="component" value="Chromosome 2"/>
</dbReference>
<dbReference type="GO" id="GO:0003677">
    <property type="term" value="F:DNA binding"/>
    <property type="evidence" value="ECO:0007669"/>
    <property type="project" value="UniProtKB-UniRule"/>
</dbReference>
<dbReference type="GO" id="GO:0008270">
    <property type="term" value="F:zinc ion binding"/>
    <property type="evidence" value="ECO:0007669"/>
    <property type="project" value="UniProtKB-KW"/>
</dbReference>
<dbReference type="GO" id="GO:0006310">
    <property type="term" value="P:DNA recombination"/>
    <property type="evidence" value="ECO:0007669"/>
    <property type="project" value="UniProtKB-UniRule"/>
</dbReference>
<dbReference type="GO" id="GO:0006281">
    <property type="term" value="P:DNA repair"/>
    <property type="evidence" value="ECO:0007669"/>
    <property type="project" value="UniProtKB-UniRule"/>
</dbReference>
<dbReference type="CDD" id="cd01025">
    <property type="entry name" value="TOPRIM_recR"/>
    <property type="match status" value="1"/>
</dbReference>
<dbReference type="Gene3D" id="3.30.60.80">
    <property type="match status" value="1"/>
</dbReference>
<dbReference type="Gene3D" id="3.40.1360.10">
    <property type="match status" value="1"/>
</dbReference>
<dbReference type="Gene3D" id="6.10.250.240">
    <property type="match status" value="1"/>
</dbReference>
<dbReference type="Gene3D" id="1.10.8.420">
    <property type="entry name" value="RecR Domain 1"/>
    <property type="match status" value="1"/>
</dbReference>
<dbReference type="HAMAP" id="MF_00017">
    <property type="entry name" value="RecR"/>
    <property type="match status" value="1"/>
</dbReference>
<dbReference type="InterPro" id="IPR000093">
    <property type="entry name" value="DNA_Rcmb_RecR"/>
</dbReference>
<dbReference type="InterPro" id="IPR023627">
    <property type="entry name" value="Rcmb_RecR"/>
</dbReference>
<dbReference type="InterPro" id="IPR015967">
    <property type="entry name" value="Rcmb_RecR_Znf"/>
</dbReference>
<dbReference type="InterPro" id="IPR006171">
    <property type="entry name" value="TOPRIM_dom"/>
</dbReference>
<dbReference type="InterPro" id="IPR034137">
    <property type="entry name" value="TOPRIM_RecR"/>
</dbReference>
<dbReference type="NCBIfam" id="TIGR00615">
    <property type="entry name" value="recR"/>
    <property type="match status" value="1"/>
</dbReference>
<dbReference type="PANTHER" id="PTHR30446">
    <property type="entry name" value="RECOMBINATION PROTEIN RECR"/>
    <property type="match status" value="1"/>
</dbReference>
<dbReference type="PANTHER" id="PTHR30446:SF0">
    <property type="entry name" value="RECOMBINATION PROTEIN RECR"/>
    <property type="match status" value="1"/>
</dbReference>
<dbReference type="Pfam" id="PF21175">
    <property type="entry name" value="RecR_C"/>
    <property type="match status" value="1"/>
</dbReference>
<dbReference type="Pfam" id="PF21176">
    <property type="entry name" value="RecR_HhH"/>
    <property type="match status" value="1"/>
</dbReference>
<dbReference type="Pfam" id="PF02132">
    <property type="entry name" value="RecR_ZnF"/>
    <property type="match status" value="1"/>
</dbReference>
<dbReference type="Pfam" id="PF13662">
    <property type="entry name" value="Toprim_4"/>
    <property type="match status" value="1"/>
</dbReference>
<dbReference type="SMART" id="SM00493">
    <property type="entry name" value="TOPRIM"/>
    <property type="match status" value="1"/>
</dbReference>
<dbReference type="SUPFAM" id="SSF111304">
    <property type="entry name" value="Recombination protein RecR"/>
    <property type="match status" value="1"/>
</dbReference>
<dbReference type="PROSITE" id="PS50880">
    <property type="entry name" value="TOPRIM"/>
    <property type="match status" value="1"/>
</dbReference>
<keyword id="KW-0227">DNA damage</keyword>
<keyword id="KW-0233">DNA recombination</keyword>
<keyword id="KW-0234">DNA repair</keyword>
<keyword id="KW-0479">Metal-binding</keyword>
<keyword id="KW-1185">Reference proteome</keyword>
<keyword id="KW-0862">Zinc</keyword>
<keyword id="KW-0863">Zinc-finger</keyword>
<proteinExistence type="inferred from homology"/>